<name>MUTL_CLOTT</name>
<feature type="chain" id="PRO_0000096652" description="Protein MutL">
    <location>
        <begin position="1"/>
        <end position="462"/>
    </location>
</feature>
<dbReference type="EMBL" id="X70499">
    <property type="protein sequence ID" value="CAA49909.1"/>
    <property type="molecule type" value="Genomic_DNA"/>
</dbReference>
<dbReference type="PIR" id="S29503">
    <property type="entry name" value="S29503"/>
</dbReference>
<dbReference type="RefSeq" id="WP_035147519.1">
    <property type="nucleotide sequence ID" value="NZ_JAAZWO010000006.1"/>
</dbReference>
<dbReference type="SMR" id="Q05491"/>
<dbReference type="InterPro" id="IPR006230">
    <property type="entry name" value="MutL"/>
</dbReference>
<dbReference type="NCBIfam" id="NF040745">
    <property type="entry name" value="accessory_GlmL"/>
    <property type="match status" value="1"/>
</dbReference>
<dbReference type="NCBIfam" id="TIGR01319">
    <property type="entry name" value="glmL_fam"/>
    <property type="match status" value="1"/>
</dbReference>
<dbReference type="Pfam" id="PF13941">
    <property type="entry name" value="MutL"/>
    <property type="match status" value="1"/>
</dbReference>
<dbReference type="PIRSF" id="PIRSF004729">
    <property type="entry name" value="MutL"/>
    <property type="match status" value="1"/>
</dbReference>
<sequence>MDAYLLLDFGSTYTKLTAVDIENEGILATAKDITTIESDIMVGFNKAYEKLTEQLEGKEVNFVKKLACSSAAGGLKMIAIGLVPELTAEAAKRAALGAGARVLNVYSYDLTNKEVEEIKNSNLDIILLAGGTDGGNKECMIHNAKMLAEHGVKLPIVVAGNKVVSDEVSEIFDKAGIFYRVTENVMPKLNTLNVEPAREEIRQIFMKKIVEAKGMSNAESFINGILMPTPAAVLKAARVLAEGTDKEDGIGDLIVVDIGGATTDVHSLADGEPSKPGVTLRGLEEPFAKRTVEGDLGMRYSAISLWEASGTRKLQKYLCDNTVDVEACCKYRAEHIKMVPETEEEIKFDEAMAKVATDMAMERHVGVIESMYTPMGVIYSQIGKDLLNVKCVIGTGGVLVHSKNPGEILKAGSFDMADATHLKPQHPEYYIDKTYILSAMGLLAEDLPDKAVRIMKKYLVKV</sequence>
<comment type="function">
    <text>May play a role in glutamate fermentation.</text>
</comment>
<gene>
    <name type="primary">mutL</name>
</gene>
<organism>
    <name type="scientific">Clostridium tetanomorphum</name>
    <dbReference type="NCBI Taxonomy" id="1553"/>
    <lineage>
        <taxon>Bacteria</taxon>
        <taxon>Bacillati</taxon>
        <taxon>Bacillota</taxon>
        <taxon>Clostridia</taxon>
        <taxon>Eubacteriales</taxon>
        <taxon>Clostridiaceae</taxon>
        <taxon>Clostridium</taxon>
    </lineage>
</organism>
<proteinExistence type="predicted"/>
<reference key="1">
    <citation type="journal article" date="1993" name="FEBS Lett.">
        <title>Cloning and sequencing of glutamate mutase component E from Clostridium tetanomorphum. Organization of the mut genes.</title>
        <authorList>
            <person name="Holloway D.E."/>
            <person name="Marsh E.N.G."/>
        </authorList>
    </citation>
    <scope>NUCLEOTIDE SEQUENCE [GENOMIC DNA]</scope>
    <source>
        <strain>ATCC 15920 / DSM 528 / NCIMB 11547 / H1</strain>
    </source>
</reference>
<protein>
    <recommendedName>
        <fullName>Protein MutL</fullName>
    </recommendedName>
</protein>
<accession>Q05491</accession>